<sequence>MYTLARQLLFKLSPETSHELSIDLIGAGGRLGLNRLLAPRPASLPVSVLGLEFPNPVGLAAGLDKNGDAIDGFGQLGFGFIEIGTVTPRPQPGNPKPRLFRLPQASAIINRMGFNNHGVDHLLARVRAAKYRGVLGINIGKNFDTPVERAVDDYLTCLDKVYADASYVTVNVSSPNTPGLRSLQFGDSLKQLLEALRQRQEDLALRHGRRVPLAIKIAPDMSDEETALVAAALVEAGMDAVIATNTTLGREGVEGLPHGDEAGGLSGAPVREKSTHTVKVLAGELGGRLPIIAAGGITEGAHAAEKIAAGASLVQIYSGFIYKGPALIREAVDAIAALPRRN</sequence>
<organism>
    <name type="scientific">Pseudomonas paraeruginosa (strain DSM 24068 / PA7)</name>
    <name type="common">Pseudomonas aeruginosa (strain PA7)</name>
    <dbReference type="NCBI Taxonomy" id="381754"/>
    <lineage>
        <taxon>Bacteria</taxon>
        <taxon>Pseudomonadati</taxon>
        <taxon>Pseudomonadota</taxon>
        <taxon>Gammaproteobacteria</taxon>
        <taxon>Pseudomonadales</taxon>
        <taxon>Pseudomonadaceae</taxon>
        <taxon>Pseudomonas</taxon>
        <taxon>Pseudomonas paraeruginosa</taxon>
    </lineage>
</organism>
<gene>
    <name evidence="1" type="primary">pyrD</name>
    <name type="ordered locus">PSPA7_2087</name>
</gene>
<accession>A6V325</accession>
<evidence type="ECO:0000255" key="1">
    <source>
        <dbReference type="HAMAP-Rule" id="MF_00225"/>
    </source>
</evidence>
<comment type="function">
    <text evidence="1">Catalyzes the conversion of dihydroorotate to orotate with quinone as electron acceptor.</text>
</comment>
<comment type="catalytic activity">
    <reaction evidence="1">
        <text>(S)-dihydroorotate + a quinone = orotate + a quinol</text>
        <dbReference type="Rhea" id="RHEA:30187"/>
        <dbReference type="ChEBI" id="CHEBI:24646"/>
        <dbReference type="ChEBI" id="CHEBI:30839"/>
        <dbReference type="ChEBI" id="CHEBI:30864"/>
        <dbReference type="ChEBI" id="CHEBI:132124"/>
        <dbReference type="EC" id="1.3.5.2"/>
    </reaction>
</comment>
<comment type="cofactor">
    <cofactor evidence="1">
        <name>FMN</name>
        <dbReference type="ChEBI" id="CHEBI:58210"/>
    </cofactor>
    <text evidence="1">Binds 1 FMN per subunit.</text>
</comment>
<comment type="pathway">
    <text evidence="1">Pyrimidine metabolism; UMP biosynthesis via de novo pathway; orotate from (S)-dihydroorotate (quinone route): step 1/1.</text>
</comment>
<comment type="subunit">
    <text evidence="1">Monomer.</text>
</comment>
<comment type="subcellular location">
    <subcellularLocation>
        <location evidence="1">Cell membrane</location>
        <topology evidence="1">Peripheral membrane protein</topology>
    </subcellularLocation>
</comment>
<comment type="similarity">
    <text evidence="1">Belongs to the dihydroorotate dehydrogenase family. Type 2 subfamily.</text>
</comment>
<keyword id="KW-1003">Cell membrane</keyword>
<keyword id="KW-0285">Flavoprotein</keyword>
<keyword id="KW-0288">FMN</keyword>
<keyword id="KW-0472">Membrane</keyword>
<keyword id="KW-0560">Oxidoreductase</keyword>
<keyword id="KW-0665">Pyrimidine biosynthesis</keyword>
<reference key="1">
    <citation type="submission" date="2007-06" db="EMBL/GenBank/DDBJ databases">
        <authorList>
            <person name="Dodson R.J."/>
            <person name="Harkins D."/>
            <person name="Paulsen I.T."/>
        </authorList>
    </citation>
    <scope>NUCLEOTIDE SEQUENCE [LARGE SCALE GENOMIC DNA]</scope>
    <source>
        <strain>DSM 24068 / PA7</strain>
    </source>
</reference>
<name>PYRD_PSEP7</name>
<proteinExistence type="inferred from homology"/>
<protein>
    <recommendedName>
        <fullName evidence="1">Dihydroorotate dehydrogenase (quinone)</fullName>
        <ecNumber evidence="1">1.3.5.2</ecNumber>
    </recommendedName>
    <alternativeName>
        <fullName evidence="1">DHOdehase</fullName>
        <shortName evidence="1">DHOD</shortName>
        <shortName evidence="1">DHODase</shortName>
    </alternativeName>
    <alternativeName>
        <fullName evidence="1">Dihydroorotate oxidase</fullName>
    </alternativeName>
</protein>
<feature type="chain" id="PRO_1000024198" description="Dihydroorotate dehydrogenase (quinone)">
    <location>
        <begin position="1"/>
        <end position="342"/>
    </location>
</feature>
<feature type="active site" description="Nucleophile" evidence="1">
    <location>
        <position position="174"/>
    </location>
</feature>
<feature type="binding site" evidence="1">
    <location>
        <begin position="61"/>
        <end position="65"/>
    </location>
    <ligand>
        <name>FMN</name>
        <dbReference type="ChEBI" id="CHEBI:58210"/>
    </ligand>
</feature>
<feature type="binding site" evidence="1">
    <location>
        <position position="65"/>
    </location>
    <ligand>
        <name>substrate</name>
    </ligand>
</feature>
<feature type="binding site" evidence="1">
    <location>
        <position position="85"/>
    </location>
    <ligand>
        <name>FMN</name>
        <dbReference type="ChEBI" id="CHEBI:58210"/>
    </ligand>
</feature>
<feature type="binding site" evidence="1">
    <location>
        <begin position="110"/>
        <end position="114"/>
    </location>
    <ligand>
        <name>substrate</name>
    </ligand>
</feature>
<feature type="binding site" evidence="1">
    <location>
        <position position="138"/>
    </location>
    <ligand>
        <name>FMN</name>
        <dbReference type="ChEBI" id="CHEBI:58210"/>
    </ligand>
</feature>
<feature type="binding site" evidence="1">
    <location>
        <position position="171"/>
    </location>
    <ligand>
        <name>FMN</name>
        <dbReference type="ChEBI" id="CHEBI:58210"/>
    </ligand>
</feature>
<feature type="binding site" evidence="1">
    <location>
        <position position="171"/>
    </location>
    <ligand>
        <name>substrate</name>
    </ligand>
</feature>
<feature type="binding site" evidence="1">
    <location>
        <position position="176"/>
    </location>
    <ligand>
        <name>substrate</name>
    </ligand>
</feature>
<feature type="binding site" evidence="1">
    <location>
        <position position="216"/>
    </location>
    <ligand>
        <name>FMN</name>
        <dbReference type="ChEBI" id="CHEBI:58210"/>
    </ligand>
</feature>
<feature type="binding site" evidence="1">
    <location>
        <position position="244"/>
    </location>
    <ligand>
        <name>FMN</name>
        <dbReference type="ChEBI" id="CHEBI:58210"/>
    </ligand>
</feature>
<feature type="binding site" evidence="1">
    <location>
        <begin position="245"/>
        <end position="246"/>
    </location>
    <ligand>
        <name>substrate</name>
    </ligand>
</feature>
<feature type="binding site" evidence="1">
    <location>
        <position position="267"/>
    </location>
    <ligand>
        <name>FMN</name>
        <dbReference type="ChEBI" id="CHEBI:58210"/>
    </ligand>
</feature>
<feature type="binding site" evidence="1">
    <location>
        <position position="296"/>
    </location>
    <ligand>
        <name>FMN</name>
        <dbReference type="ChEBI" id="CHEBI:58210"/>
    </ligand>
</feature>
<feature type="binding site" evidence="1">
    <location>
        <begin position="317"/>
        <end position="318"/>
    </location>
    <ligand>
        <name>FMN</name>
        <dbReference type="ChEBI" id="CHEBI:58210"/>
    </ligand>
</feature>
<dbReference type="EC" id="1.3.5.2" evidence="1"/>
<dbReference type="EMBL" id="CP000744">
    <property type="protein sequence ID" value="ABR85802.1"/>
    <property type="molecule type" value="Genomic_DNA"/>
</dbReference>
<dbReference type="RefSeq" id="WP_003152051.1">
    <property type="nucleotide sequence ID" value="NC_009656.1"/>
</dbReference>
<dbReference type="SMR" id="A6V325"/>
<dbReference type="GeneID" id="77220439"/>
<dbReference type="KEGG" id="pap:PSPA7_2087"/>
<dbReference type="HOGENOM" id="CLU_013640_2_0_6"/>
<dbReference type="UniPathway" id="UPA00070">
    <property type="reaction ID" value="UER00946"/>
</dbReference>
<dbReference type="Proteomes" id="UP000001582">
    <property type="component" value="Chromosome"/>
</dbReference>
<dbReference type="GO" id="GO:0005737">
    <property type="term" value="C:cytoplasm"/>
    <property type="evidence" value="ECO:0007669"/>
    <property type="project" value="InterPro"/>
</dbReference>
<dbReference type="GO" id="GO:0005886">
    <property type="term" value="C:plasma membrane"/>
    <property type="evidence" value="ECO:0007669"/>
    <property type="project" value="UniProtKB-SubCell"/>
</dbReference>
<dbReference type="GO" id="GO:0106430">
    <property type="term" value="F:dihydroorotate dehydrogenase (quinone) activity"/>
    <property type="evidence" value="ECO:0007669"/>
    <property type="project" value="UniProtKB-EC"/>
</dbReference>
<dbReference type="GO" id="GO:0006207">
    <property type="term" value="P:'de novo' pyrimidine nucleobase biosynthetic process"/>
    <property type="evidence" value="ECO:0007669"/>
    <property type="project" value="InterPro"/>
</dbReference>
<dbReference type="GO" id="GO:0044205">
    <property type="term" value="P:'de novo' UMP biosynthetic process"/>
    <property type="evidence" value="ECO:0007669"/>
    <property type="project" value="UniProtKB-UniRule"/>
</dbReference>
<dbReference type="CDD" id="cd04738">
    <property type="entry name" value="DHOD_2_like"/>
    <property type="match status" value="1"/>
</dbReference>
<dbReference type="FunFam" id="3.20.20.70:FF:000028">
    <property type="entry name" value="Dihydroorotate dehydrogenase (quinone)"/>
    <property type="match status" value="1"/>
</dbReference>
<dbReference type="Gene3D" id="3.20.20.70">
    <property type="entry name" value="Aldolase class I"/>
    <property type="match status" value="1"/>
</dbReference>
<dbReference type="HAMAP" id="MF_00225">
    <property type="entry name" value="DHO_dh_type2"/>
    <property type="match status" value="1"/>
</dbReference>
<dbReference type="InterPro" id="IPR013785">
    <property type="entry name" value="Aldolase_TIM"/>
</dbReference>
<dbReference type="InterPro" id="IPR050074">
    <property type="entry name" value="DHO_dehydrogenase"/>
</dbReference>
<dbReference type="InterPro" id="IPR012135">
    <property type="entry name" value="Dihydroorotate_DH_1_2"/>
</dbReference>
<dbReference type="InterPro" id="IPR005719">
    <property type="entry name" value="Dihydroorotate_DH_2"/>
</dbReference>
<dbReference type="InterPro" id="IPR005720">
    <property type="entry name" value="Dihydroorotate_DH_cat"/>
</dbReference>
<dbReference type="InterPro" id="IPR001295">
    <property type="entry name" value="Dihydroorotate_DH_CS"/>
</dbReference>
<dbReference type="NCBIfam" id="NF003644">
    <property type="entry name" value="PRK05286.1-1"/>
    <property type="match status" value="1"/>
</dbReference>
<dbReference type="NCBIfam" id="NF003645">
    <property type="entry name" value="PRK05286.1-2"/>
    <property type="match status" value="1"/>
</dbReference>
<dbReference type="NCBIfam" id="NF003646">
    <property type="entry name" value="PRK05286.1-4"/>
    <property type="match status" value="1"/>
</dbReference>
<dbReference type="NCBIfam" id="NF003652">
    <property type="entry name" value="PRK05286.2-5"/>
    <property type="match status" value="1"/>
</dbReference>
<dbReference type="NCBIfam" id="TIGR01036">
    <property type="entry name" value="pyrD_sub2"/>
    <property type="match status" value="1"/>
</dbReference>
<dbReference type="PANTHER" id="PTHR48109:SF4">
    <property type="entry name" value="DIHYDROOROTATE DEHYDROGENASE (QUINONE), MITOCHONDRIAL"/>
    <property type="match status" value="1"/>
</dbReference>
<dbReference type="PANTHER" id="PTHR48109">
    <property type="entry name" value="DIHYDROOROTATE DEHYDROGENASE (QUINONE), MITOCHONDRIAL-RELATED"/>
    <property type="match status" value="1"/>
</dbReference>
<dbReference type="Pfam" id="PF01180">
    <property type="entry name" value="DHO_dh"/>
    <property type="match status" value="1"/>
</dbReference>
<dbReference type="PIRSF" id="PIRSF000164">
    <property type="entry name" value="DHO_oxidase"/>
    <property type="match status" value="1"/>
</dbReference>
<dbReference type="SUPFAM" id="SSF51395">
    <property type="entry name" value="FMN-linked oxidoreductases"/>
    <property type="match status" value="1"/>
</dbReference>
<dbReference type="PROSITE" id="PS00911">
    <property type="entry name" value="DHODEHASE_1"/>
    <property type="match status" value="1"/>
</dbReference>